<keyword id="KW-0143">Chaperone</keyword>
<keyword id="KW-0963">Cytoplasm</keyword>
<keyword id="KW-1185">Reference proteome</keyword>
<keyword id="KW-0690">Ribosome biogenesis</keyword>
<keyword id="KW-0698">rRNA processing</keyword>
<evidence type="ECO:0000255" key="1">
    <source>
        <dbReference type="HAMAP-Rule" id="MF_00014"/>
    </source>
</evidence>
<comment type="function">
    <text evidence="1">An accessory protein needed during the final step in the assembly of 30S ribosomal subunit, possibly for assembly of the head region. Essential for efficient processing of 16S rRNA. May be needed both before and after RbfA during the maturation of 16S rRNA. It has affinity for free ribosomal 30S subunits but not for 70S ribosomes.</text>
</comment>
<comment type="subunit">
    <text evidence="1">Binds ribosomal protein uS19.</text>
</comment>
<comment type="subcellular location">
    <subcellularLocation>
        <location evidence="1">Cytoplasm</location>
    </subcellularLocation>
</comment>
<comment type="domain">
    <text evidence="1">The PRC barrel domain binds ribosomal protein uS19.</text>
</comment>
<comment type="similarity">
    <text evidence="1">Belongs to the RimM family.</text>
</comment>
<dbReference type="EMBL" id="CP001063">
    <property type="protein sequence ID" value="ACD06307.1"/>
    <property type="molecule type" value="Genomic_DNA"/>
</dbReference>
<dbReference type="RefSeq" id="WP_000043330.1">
    <property type="nucleotide sequence ID" value="NC_010658.1"/>
</dbReference>
<dbReference type="SMR" id="B2TYN0"/>
<dbReference type="STRING" id="344609.SbBS512_E2997"/>
<dbReference type="GeneID" id="75058467"/>
<dbReference type="KEGG" id="sbc:SbBS512_E2997"/>
<dbReference type="HOGENOM" id="CLU_077636_1_0_6"/>
<dbReference type="Proteomes" id="UP000001030">
    <property type="component" value="Chromosome"/>
</dbReference>
<dbReference type="GO" id="GO:0005737">
    <property type="term" value="C:cytoplasm"/>
    <property type="evidence" value="ECO:0007669"/>
    <property type="project" value="UniProtKB-SubCell"/>
</dbReference>
<dbReference type="GO" id="GO:0005840">
    <property type="term" value="C:ribosome"/>
    <property type="evidence" value="ECO:0007669"/>
    <property type="project" value="InterPro"/>
</dbReference>
<dbReference type="GO" id="GO:0043022">
    <property type="term" value="F:ribosome binding"/>
    <property type="evidence" value="ECO:0007669"/>
    <property type="project" value="InterPro"/>
</dbReference>
<dbReference type="GO" id="GO:0042274">
    <property type="term" value="P:ribosomal small subunit biogenesis"/>
    <property type="evidence" value="ECO:0007669"/>
    <property type="project" value="UniProtKB-UniRule"/>
</dbReference>
<dbReference type="GO" id="GO:0006364">
    <property type="term" value="P:rRNA processing"/>
    <property type="evidence" value="ECO:0007669"/>
    <property type="project" value="UniProtKB-UniRule"/>
</dbReference>
<dbReference type="FunFam" id="2.30.30.240:FF:000001">
    <property type="entry name" value="Ribosome maturation factor RimM"/>
    <property type="match status" value="1"/>
</dbReference>
<dbReference type="FunFam" id="2.40.30.60:FF:000001">
    <property type="entry name" value="Ribosome maturation factor RimM"/>
    <property type="match status" value="1"/>
</dbReference>
<dbReference type="Gene3D" id="2.30.30.240">
    <property type="entry name" value="PRC-barrel domain"/>
    <property type="match status" value="1"/>
</dbReference>
<dbReference type="Gene3D" id="2.40.30.60">
    <property type="entry name" value="RimM"/>
    <property type="match status" value="1"/>
</dbReference>
<dbReference type="HAMAP" id="MF_00014">
    <property type="entry name" value="Ribosome_mat_RimM"/>
    <property type="match status" value="1"/>
</dbReference>
<dbReference type="InterPro" id="IPR011033">
    <property type="entry name" value="PRC_barrel-like_sf"/>
</dbReference>
<dbReference type="InterPro" id="IPR056792">
    <property type="entry name" value="PRC_RimM"/>
</dbReference>
<dbReference type="InterPro" id="IPR011961">
    <property type="entry name" value="RimM"/>
</dbReference>
<dbReference type="InterPro" id="IPR002676">
    <property type="entry name" value="RimM_N"/>
</dbReference>
<dbReference type="InterPro" id="IPR036976">
    <property type="entry name" value="RimM_N_sf"/>
</dbReference>
<dbReference type="InterPro" id="IPR009000">
    <property type="entry name" value="Transl_B-barrel_sf"/>
</dbReference>
<dbReference type="NCBIfam" id="TIGR02273">
    <property type="entry name" value="16S_RimM"/>
    <property type="match status" value="1"/>
</dbReference>
<dbReference type="PANTHER" id="PTHR33692">
    <property type="entry name" value="RIBOSOME MATURATION FACTOR RIMM"/>
    <property type="match status" value="1"/>
</dbReference>
<dbReference type="PANTHER" id="PTHR33692:SF1">
    <property type="entry name" value="RIBOSOME MATURATION FACTOR RIMM"/>
    <property type="match status" value="1"/>
</dbReference>
<dbReference type="Pfam" id="PF24986">
    <property type="entry name" value="PRC_RimM"/>
    <property type="match status" value="1"/>
</dbReference>
<dbReference type="Pfam" id="PF01782">
    <property type="entry name" value="RimM"/>
    <property type="match status" value="1"/>
</dbReference>
<dbReference type="SUPFAM" id="SSF50346">
    <property type="entry name" value="PRC-barrel domain"/>
    <property type="match status" value="1"/>
</dbReference>
<dbReference type="SUPFAM" id="SSF50447">
    <property type="entry name" value="Translation proteins"/>
    <property type="match status" value="1"/>
</dbReference>
<proteinExistence type="inferred from homology"/>
<name>RIMM_SHIB3</name>
<feature type="chain" id="PRO_1000089520" description="Ribosome maturation factor RimM">
    <location>
        <begin position="1"/>
        <end position="182"/>
    </location>
</feature>
<feature type="domain" description="PRC barrel" evidence="1">
    <location>
        <begin position="102"/>
        <end position="182"/>
    </location>
</feature>
<accession>B2TYN0</accession>
<sequence>MSKQLTAQAPVDPIVLGKMGSSYGIRGWLRVFSSTEDAESIFDYQPWFIQKAGQWQQVQLESWKHHNQDMIIKLKGVDDRDAANLLTNCEIVVDSSQLPQLEEGDYYWKDLMGCQVVTTEGYDLGKVIDMMETGSNDVLVIKANLKDAFGIKERLVPFLDGQVIKKVDLTTRSIEVDWDPGF</sequence>
<protein>
    <recommendedName>
        <fullName evidence="1">Ribosome maturation factor RimM</fullName>
    </recommendedName>
</protein>
<reference key="1">
    <citation type="submission" date="2008-05" db="EMBL/GenBank/DDBJ databases">
        <title>Complete sequence of Shigella boydii serotype 18 strain BS512.</title>
        <authorList>
            <person name="Rasko D.A."/>
            <person name="Rosovitz M."/>
            <person name="Maurelli A.T."/>
            <person name="Myers G."/>
            <person name="Seshadri R."/>
            <person name="Cer R."/>
            <person name="Jiang L."/>
            <person name="Ravel J."/>
            <person name="Sebastian Y."/>
        </authorList>
    </citation>
    <scope>NUCLEOTIDE SEQUENCE [LARGE SCALE GENOMIC DNA]</scope>
    <source>
        <strain>CDC 3083-94 / BS512</strain>
    </source>
</reference>
<gene>
    <name evidence="1" type="primary">rimM</name>
    <name type="ordered locus">SbBS512_E2997</name>
</gene>
<organism>
    <name type="scientific">Shigella boydii serotype 18 (strain CDC 3083-94 / BS512)</name>
    <dbReference type="NCBI Taxonomy" id="344609"/>
    <lineage>
        <taxon>Bacteria</taxon>
        <taxon>Pseudomonadati</taxon>
        <taxon>Pseudomonadota</taxon>
        <taxon>Gammaproteobacteria</taxon>
        <taxon>Enterobacterales</taxon>
        <taxon>Enterobacteriaceae</taxon>
        <taxon>Shigella</taxon>
    </lineage>
</organism>